<accession>Q6UX04</accession>
<accession>O60529</accession>
<accession>O60530</accession>
<accession>Q96EM3</accession>
<comment type="function">
    <text evidence="6 8 17">As part of the spliceosome, plays a role in pre-mRNA splicing (PubMed:29360106). Probable inactive PPIase with no peptidyl-prolyl cis-trans isomerase activity (PubMed:20676357). As a component of the minor spliceosome, involved in the splicing of U12-type introns in pre-mRNAs (Probable).</text>
</comment>
<comment type="subunit">
    <text evidence="8 9">Part of the activated spliceosome B/catalytic step 1 spliceosome, one of the forms of the spliceosome which has a well-formed active site but still cannot catalyze the branching reaction and is composed at least of 52 proteins, the U2, U5 and U6 snRNAs and the pre-mRNA. Recruited during early steps of activated spliceosome B maturation, it is probably one of the first proteins released from this complex as he matures to the spliceosome C complex. Component of the minor spliceosome, which splices U12-type introns (PubMed:33509932).</text>
</comment>
<comment type="interaction">
    <interactant intactId="EBI-18939574">
        <id>Q6UX04-2</id>
    </interactant>
    <interactant intactId="EBI-10288852">
        <id>Q9UBU8-2</id>
        <label>MORF4L1</label>
    </interactant>
    <organismsDiffer>false</organismsDiffer>
    <experiments>3</experiments>
</comment>
<comment type="subcellular location">
    <subcellularLocation>
        <location evidence="16">Nucleus</location>
    </subcellularLocation>
</comment>
<comment type="alternative products">
    <event type="alternative splicing"/>
    <isoform>
        <id>Q6UX04-1</id>
        <name>1</name>
        <sequence type="displayed"/>
    </isoform>
    <isoform>
        <id>Q6UX04-2</id>
        <name>2</name>
        <sequence type="described" ref="VSP_030082 VSP_030083"/>
    </isoform>
</comment>
<comment type="disease" evidence="7">
    <disease id="DI-05006">
        <name>Retinitis pigmentosa with or without skeletal anomalies</name>
        <acronym>RPSKA</acronym>
        <description>An autosomal recessive disease characterized by retinal degeneration, brachydactyly, short stature, craniofacial dysmorphism, and neurologic defects. Retinal defects are consistent with retinitis pigmentosa in most patients. Neurologic manifestations include mild-to-moderate intellectual disability and psychomotor retardation.</description>
        <dbReference type="MIM" id="250410"/>
    </disease>
    <text>The disease is caused by variants affecting the gene represented in this entry.</text>
</comment>
<comment type="similarity">
    <text evidence="14">Belongs to the cyclophilin-type PPIase family.</text>
</comment>
<comment type="caution">
    <text evidence="6">Despite the fact that it belongs to the cyclophilin-type PPIase family, a report has shown that it has probably no peptidyl-prolyl cis-trans isomerase activity.</text>
</comment>
<comment type="sequence caution" evidence="14">
    <conflict type="frameshift">
        <sequence resource="EMBL-CDS" id="AAC18041"/>
    </conflict>
</comment>
<comment type="sequence caution" evidence="14">
    <conflict type="frameshift">
        <sequence resource="EMBL-CDS" id="AAC18042"/>
    </conflict>
</comment>
<comment type="sequence caution" evidence="14">
    <conflict type="erroneous initiation">
        <sequence resource="EMBL-CDS" id="AAH12117"/>
    </conflict>
</comment>
<dbReference type="EMBL" id="AF039692">
    <property type="protein sequence ID" value="AAC18041.1"/>
    <property type="status" value="ALT_FRAME"/>
    <property type="molecule type" value="mRNA"/>
</dbReference>
<dbReference type="EMBL" id="AF039693">
    <property type="protein sequence ID" value="AAC18042.1"/>
    <property type="status" value="ALT_FRAME"/>
    <property type="molecule type" value="mRNA"/>
</dbReference>
<dbReference type="EMBL" id="AY358569">
    <property type="protein sequence ID" value="AAQ88932.1"/>
    <property type="molecule type" value="mRNA"/>
</dbReference>
<dbReference type="EMBL" id="CH471137">
    <property type="protein sequence ID" value="EAW51365.1"/>
    <property type="molecule type" value="Genomic_DNA"/>
</dbReference>
<dbReference type="EMBL" id="BC012117">
    <property type="protein sequence ID" value="AAH12117.1"/>
    <property type="status" value="ALT_INIT"/>
    <property type="molecule type" value="mRNA"/>
</dbReference>
<dbReference type="CCDS" id="CCDS3982.2">
    <molecule id="Q6UX04-1"/>
</dbReference>
<dbReference type="RefSeq" id="NP_001284573.1">
    <property type="nucleotide sequence ID" value="NM_001297644.1"/>
</dbReference>
<dbReference type="RefSeq" id="NP_001284574.1">
    <property type="nucleotide sequence ID" value="NM_001297645.1"/>
</dbReference>
<dbReference type="RefSeq" id="NP_005860.2">
    <molecule id="Q6UX04-1"/>
    <property type="nucleotide sequence ID" value="NM_005869.4"/>
</dbReference>
<dbReference type="PDB" id="2HQ6">
    <property type="method" value="X-ray"/>
    <property type="resolution" value="1.75 A"/>
    <property type="chains" value="A=8-173"/>
</dbReference>
<dbReference type="PDB" id="4R3E">
    <property type="method" value="X-ray"/>
    <property type="resolution" value="2.00 A"/>
    <property type="chains" value="A=1-178"/>
</dbReference>
<dbReference type="PDB" id="5Z56">
    <property type="method" value="EM"/>
    <property type="resolution" value="5.10 A"/>
    <property type="chains" value="z=1-472"/>
</dbReference>
<dbReference type="PDB" id="5Z58">
    <property type="method" value="EM"/>
    <property type="resolution" value="4.90 A"/>
    <property type="chains" value="z=1-472"/>
</dbReference>
<dbReference type="PDB" id="6FF4">
    <property type="method" value="EM"/>
    <property type="resolution" value="16.00 A"/>
    <property type="chains" value="s=1-472"/>
</dbReference>
<dbReference type="PDB" id="6FF7">
    <property type="method" value="EM"/>
    <property type="resolution" value="4.50 A"/>
    <property type="chains" value="s=1-472"/>
</dbReference>
<dbReference type="PDB" id="6YVH">
    <property type="method" value="X-ray"/>
    <property type="resolution" value="3.19 A"/>
    <property type="chains" value="C/E/G/I=378-431"/>
</dbReference>
<dbReference type="PDB" id="7DVQ">
    <property type="method" value="EM"/>
    <property type="resolution" value="2.89 A"/>
    <property type="chains" value="z=1-472"/>
</dbReference>
<dbReference type="PDB" id="8I0R">
    <property type="method" value="EM"/>
    <property type="resolution" value="3.00 A"/>
    <property type="chains" value="z=1-472"/>
</dbReference>
<dbReference type="PDBsum" id="2HQ6"/>
<dbReference type="PDBsum" id="4R3E"/>
<dbReference type="PDBsum" id="5Z56"/>
<dbReference type="PDBsum" id="5Z58"/>
<dbReference type="PDBsum" id="6FF4"/>
<dbReference type="PDBsum" id="6FF7"/>
<dbReference type="PDBsum" id="6YVH"/>
<dbReference type="PDBsum" id="7DVQ"/>
<dbReference type="PDBsum" id="8I0R"/>
<dbReference type="EMDB" id="EMD-30875"/>
<dbReference type="EMDB" id="EMD-35107"/>
<dbReference type="EMDB" id="EMD-4255"/>
<dbReference type="EMDB" id="EMD-6889"/>
<dbReference type="EMDB" id="EMD-6891"/>
<dbReference type="SMR" id="Q6UX04"/>
<dbReference type="BioGRID" id="115572">
    <property type="interactions" value="69"/>
</dbReference>
<dbReference type="CORUM" id="Q6UX04"/>
<dbReference type="FunCoup" id="Q6UX04">
    <property type="interactions" value="1815"/>
</dbReference>
<dbReference type="IntAct" id="Q6UX04">
    <property type="interactions" value="30"/>
</dbReference>
<dbReference type="MINT" id="Q6UX04"/>
<dbReference type="STRING" id="9606.ENSP00000370460"/>
<dbReference type="GlyCosmos" id="Q6UX04">
    <property type="glycosylation" value="2 sites, No reported glycans"/>
</dbReference>
<dbReference type="GlyGen" id="Q6UX04">
    <property type="glycosylation" value="3 sites, 1 O-linked glycan (1 site)"/>
</dbReference>
<dbReference type="iPTMnet" id="Q6UX04"/>
<dbReference type="PhosphoSitePlus" id="Q6UX04"/>
<dbReference type="BioMuta" id="CWC27"/>
<dbReference type="DMDM" id="74749411"/>
<dbReference type="jPOST" id="Q6UX04"/>
<dbReference type="MassIVE" id="Q6UX04"/>
<dbReference type="PaxDb" id="9606-ENSP00000370460"/>
<dbReference type="PeptideAtlas" id="Q6UX04"/>
<dbReference type="ProteomicsDB" id="67545">
    <molecule id="Q6UX04-1"/>
</dbReference>
<dbReference type="ProteomicsDB" id="67546">
    <molecule id="Q6UX04-2"/>
</dbReference>
<dbReference type="Pumba" id="Q6UX04"/>
<dbReference type="Antibodypedia" id="11511">
    <property type="antibodies" value="162 antibodies from 21 providers"/>
</dbReference>
<dbReference type="DNASU" id="10283"/>
<dbReference type="Ensembl" id="ENST00000381070.8">
    <molecule id="Q6UX04-1"/>
    <property type="protein sequence ID" value="ENSP00000370460.2"/>
    <property type="gene ID" value="ENSG00000153015.17"/>
</dbReference>
<dbReference type="GeneID" id="10283"/>
<dbReference type="KEGG" id="hsa:10283"/>
<dbReference type="MANE-Select" id="ENST00000381070.8">
    <property type="protein sequence ID" value="ENSP00000370460.2"/>
    <property type="RefSeq nucleotide sequence ID" value="NM_005869.4"/>
    <property type="RefSeq protein sequence ID" value="NP_005860.2"/>
</dbReference>
<dbReference type="UCSC" id="uc003jtn.2">
    <molecule id="Q6UX04-1"/>
    <property type="organism name" value="human"/>
</dbReference>
<dbReference type="AGR" id="HGNC:10664"/>
<dbReference type="CTD" id="10283"/>
<dbReference type="DisGeNET" id="10283"/>
<dbReference type="GeneCards" id="CWC27"/>
<dbReference type="HGNC" id="HGNC:10664">
    <property type="gene designation" value="CWC27"/>
</dbReference>
<dbReference type="HPA" id="ENSG00000153015">
    <property type="expression patterns" value="Low tissue specificity"/>
</dbReference>
<dbReference type="MalaCards" id="CWC27"/>
<dbReference type="MIM" id="250410">
    <property type="type" value="phenotype"/>
</dbReference>
<dbReference type="MIM" id="617170">
    <property type="type" value="gene"/>
</dbReference>
<dbReference type="neXtProt" id="NX_Q6UX04"/>
<dbReference type="OpenTargets" id="ENSG00000153015"/>
<dbReference type="Orphanet" id="166035">
    <property type="disease" value="Brachydactyly-short stature-retinitis pigmentosa syndrome"/>
</dbReference>
<dbReference type="PharmGKB" id="PA35594"/>
<dbReference type="VEuPathDB" id="HostDB:ENSG00000153015"/>
<dbReference type="eggNOG" id="KOG0415">
    <property type="taxonomic scope" value="Eukaryota"/>
</dbReference>
<dbReference type="eggNOG" id="KOG0885">
    <property type="taxonomic scope" value="Eukaryota"/>
</dbReference>
<dbReference type="GeneTree" id="ENSGT00940000155967"/>
<dbReference type="HOGENOM" id="CLU_012062_14_4_1"/>
<dbReference type="InParanoid" id="Q6UX04"/>
<dbReference type="OMA" id="DDWYDVY"/>
<dbReference type="OrthoDB" id="442970at2759"/>
<dbReference type="PAN-GO" id="Q6UX04">
    <property type="GO annotations" value="1 GO annotation based on evolutionary models"/>
</dbReference>
<dbReference type="PhylomeDB" id="Q6UX04"/>
<dbReference type="TreeFam" id="TF105935"/>
<dbReference type="BRENDA" id="5.2.1.8">
    <property type="organism ID" value="2681"/>
</dbReference>
<dbReference type="PathwayCommons" id="Q6UX04"/>
<dbReference type="Reactome" id="R-HSA-72163">
    <property type="pathway name" value="mRNA Splicing - Major Pathway"/>
</dbReference>
<dbReference type="SignaLink" id="Q6UX04"/>
<dbReference type="SIGNOR" id="Q6UX04"/>
<dbReference type="BioGRID-ORCS" id="10283">
    <property type="hits" value="210 hits in 1168 CRISPR screens"/>
</dbReference>
<dbReference type="ChiTaRS" id="CWC27">
    <property type="organism name" value="human"/>
</dbReference>
<dbReference type="EvolutionaryTrace" id="Q6UX04"/>
<dbReference type="GenomeRNAi" id="10283"/>
<dbReference type="Pharos" id="Q6UX04">
    <property type="development level" value="Tbio"/>
</dbReference>
<dbReference type="PRO" id="PR:Q6UX04"/>
<dbReference type="Proteomes" id="UP000005640">
    <property type="component" value="Chromosome 5"/>
</dbReference>
<dbReference type="RNAct" id="Q6UX04">
    <property type="molecule type" value="protein"/>
</dbReference>
<dbReference type="Bgee" id="ENSG00000153015">
    <property type="expression patterns" value="Expressed in tendon of biceps brachii and 190 other cell types or tissues"/>
</dbReference>
<dbReference type="ExpressionAtlas" id="Q6UX04">
    <property type="expression patterns" value="baseline and differential"/>
</dbReference>
<dbReference type="GO" id="GO:0071013">
    <property type="term" value="C:catalytic step 2 spliceosome"/>
    <property type="evidence" value="ECO:0000314"/>
    <property type="project" value="UniProtKB"/>
</dbReference>
<dbReference type="GO" id="GO:0005654">
    <property type="term" value="C:nucleoplasm"/>
    <property type="evidence" value="ECO:0000314"/>
    <property type="project" value="HPA"/>
</dbReference>
<dbReference type="GO" id="GO:0071005">
    <property type="term" value="C:U2-type precatalytic spliceosome"/>
    <property type="evidence" value="ECO:0000314"/>
    <property type="project" value="UniProtKB"/>
</dbReference>
<dbReference type="GO" id="GO:0000398">
    <property type="term" value="P:mRNA splicing, via spliceosome"/>
    <property type="evidence" value="ECO:0000305"/>
    <property type="project" value="UniProtKB"/>
</dbReference>
<dbReference type="GO" id="GO:0006457">
    <property type="term" value="P:protein folding"/>
    <property type="evidence" value="ECO:0000318"/>
    <property type="project" value="GO_Central"/>
</dbReference>
<dbReference type="CDD" id="cd22288">
    <property type="entry name" value="CWC27_CTD"/>
    <property type="match status" value="1"/>
</dbReference>
<dbReference type="CDD" id="cd01925">
    <property type="entry name" value="cyclophilin_CeCYP16-like"/>
    <property type="match status" value="1"/>
</dbReference>
<dbReference type="FunFam" id="2.40.100.10:FF:000007">
    <property type="entry name" value="Peptidyl-prolyl cis-trans isomerase CWC27 homolog"/>
    <property type="match status" value="1"/>
</dbReference>
<dbReference type="Gene3D" id="2.40.100.10">
    <property type="entry name" value="Cyclophilin-like"/>
    <property type="match status" value="1"/>
</dbReference>
<dbReference type="InterPro" id="IPR029000">
    <property type="entry name" value="Cyclophilin-like_dom_sf"/>
</dbReference>
<dbReference type="InterPro" id="IPR020892">
    <property type="entry name" value="Cyclophilin-type_PPIase_CS"/>
</dbReference>
<dbReference type="InterPro" id="IPR002130">
    <property type="entry name" value="Cyclophilin-type_PPIase_dom"/>
</dbReference>
<dbReference type="InterPro" id="IPR044666">
    <property type="entry name" value="Cyclophilin_A-like"/>
</dbReference>
<dbReference type="PANTHER" id="PTHR45625">
    <property type="entry name" value="PEPTIDYL-PROLYL CIS-TRANS ISOMERASE-RELATED"/>
    <property type="match status" value="1"/>
</dbReference>
<dbReference type="PANTHER" id="PTHR45625:SF6">
    <property type="entry name" value="SPLICEOSOME-ASSOCIATED PROTEIN CWC27 HOMOLOG"/>
    <property type="match status" value="1"/>
</dbReference>
<dbReference type="Pfam" id="PF00160">
    <property type="entry name" value="Pro_isomerase"/>
    <property type="match status" value="1"/>
</dbReference>
<dbReference type="PRINTS" id="PR00153">
    <property type="entry name" value="CSAPPISMRASE"/>
</dbReference>
<dbReference type="SUPFAM" id="SSF50891">
    <property type="entry name" value="Cyclophilin-like"/>
    <property type="match status" value="1"/>
</dbReference>
<dbReference type="PROSITE" id="PS00170">
    <property type="entry name" value="CSA_PPIASE_1"/>
    <property type="match status" value="1"/>
</dbReference>
<dbReference type="PROSITE" id="PS50072">
    <property type="entry name" value="CSA_PPIASE_2"/>
    <property type="match status" value="1"/>
</dbReference>
<proteinExistence type="evidence at protein level"/>
<name>CWC27_HUMAN</name>
<gene>
    <name evidence="18" type="primary">CWC27</name>
    <name evidence="11" type="synonym">SDCCAG10</name>
    <name evidence="11" type="ORF">UNQ438/PRO871</name>
</gene>
<organism>
    <name type="scientific">Homo sapiens</name>
    <name type="common">Human</name>
    <dbReference type="NCBI Taxonomy" id="9606"/>
    <lineage>
        <taxon>Eukaryota</taxon>
        <taxon>Metazoa</taxon>
        <taxon>Chordata</taxon>
        <taxon>Craniata</taxon>
        <taxon>Vertebrata</taxon>
        <taxon>Euteleostomi</taxon>
        <taxon>Mammalia</taxon>
        <taxon>Eutheria</taxon>
        <taxon>Euarchontoglires</taxon>
        <taxon>Primates</taxon>
        <taxon>Haplorrhini</taxon>
        <taxon>Catarrhini</taxon>
        <taxon>Hominidae</taxon>
        <taxon>Homo</taxon>
    </lineage>
</organism>
<feature type="initiator methionine" description="Removed" evidence="22">
    <location>
        <position position="1"/>
    </location>
</feature>
<feature type="chain" id="PRO_0000313647" description="Spliceosome-associated protein CWC27 homolog">
    <location>
        <begin position="2"/>
        <end position="472"/>
    </location>
</feature>
<feature type="domain" description="PPIase cyclophilin-type" evidence="3">
    <location>
        <begin position="11"/>
        <end position="166"/>
    </location>
</feature>
<feature type="region of interest" description="Disordered" evidence="4">
    <location>
        <begin position="206"/>
        <end position="386"/>
    </location>
</feature>
<feature type="region of interest" description="Disordered" evidence="4">
    <location>
        <begin position="398"/>
        <end position="472"/>
    </location>
</feature>
<feature type="coiled-coil region" evidence="2">
    <location>
        <begin position="206"/>
        <end position="230"/>
    </location>
</feature>
<feature type="coiled-coil region" evidence="2">
    <location>
        <begin position="306"/>
        <end position="377"/>
    </location>
</feature>
<feature type="compositionally biased region" description="Basic and acidic residues" evidence="4">
    <location>
        <begin position="231"/>
        <end position="241"/>
    </location>
</feature>
<feature type="compositionally biased region" description="Acidic residues" evidence="4">
    <location>
        <begin position="257"/>
        <end position="268"/>
    </location>
</feature>
<feature type="compositionally biased region" description="Basic and acidic residues" evidence="4">
    <location>
        <begin position="269"/>
        <end position="286"/>
    </location>
</feature>
<feature type="compositionally biased region" description="Basic and acidic residues" evidence="4">
    <location>
        <begin position="304"/>
        <end position="347"/>
    </location>
</feature>
<feature type="compositionally biased region" description="Basic and acidic residues" evidence="4">
    <location>
        <begin position="359"/>
        <end position="371"/>
    </location>
</feature>
<feature type="compositionally biased region" description="Acidic residues" evidence="4">
    <location>
        <begin position="404"/>
        <end position="418"/>
    </location>
</feature>
<feature type="compositionally biased region" description="Basic and acidic residues" evidence="4">
    <location>
        <begin position="425"/>
        <end position="437"/>
    </location>
</feature>
<feature type="compositionally biased region" description="Basic and acidic residues" evidence="4">
    <location>
        <begin position="457"/>
        <end position="472"/>
    </location>
</feature>
<feature type="modified residue" description="N-acetylserine" evidence="22">
    <location>
        <position position="2"/>
    </location>
</feature>
<feature type="modified residue" description="Phosphoserine" evidence="1">
    <location>
        <position position="346"/>
    </location>
</feature>
<feature type="glycosylation site" description="N-linked (GlcNAc...) asparagine" evidence="2">
    <location>
        <position position="109"/>
    </location>
</feature>
<feature type="glycosylation site" description="N-linked (GlcNAc...) asparagine" evidence="5">
    <location>
        <position position="201"/>
    </location>
</feature>
<feature type="splice variant" id="VSP_030082" description="In isoform 2." evidence="12">
    <original>TLALLNQ</original>
    <variation>DVTCTS</variation>
    <location>
        <begin position="385"/>
        <end position="391"/>
    </location>
</feature>
<feature type="splice variant" id="VSP_030083" description="In isoform 2." evidence="12">
    <location>
        <begin position="392"/>
        <end position="472"/>
    </location>
</feature>
<feature type="sequence variant" id="VAR_078981" description="In RPSKA." evidence="7">
    <location>
        <begin position="7"/>
        <end position="472"/>
    </location>
</feature>
<feature type="sequence variant" id="VAR_078982" description="In RPSKA." evidence="7">
    <location>
        <begin position="143"/>
        <end position="472"/>
    </location>
</feature>
<feature type="sequence variant" id="VAR_078983" description="In RPSKA." evidence="7">
    <location>
        <begin position="206"/>
        <end position="472"/>
    </location>
</feature>
<feature type="sequence variant" id="VAR_037686" description="In dbSNP:rs7735338." evidence="10">
    <original>P</original>
    <variation>A</variation>
    <location>
        <position position="256"/>
    </location>
</feature>
<feature type="sequence variant" id="VAR_078984" description="In RPSKA." evidence="7">
    <location>
        <begin position="315"/>
        <end position="472"/>
    </location>
</feature>
<feature type="sequence conflict" description="In Ref. 1; AAC18041." evidence="14" ref="1">
    <original>SQ</original>
    <variation>TH</variation>
    <location>
        <begin position="111"/>
        <end position="112"/>
    </location>
</feature>
<feature type="sequence conflict" description="In Ref. 1; AAC18042." evidence="14" ref="1">
    <original>K</original>
    <variation>E</variation>
    <location>
        <position position="331"/>
    </location>
</feature>
<feature type="strand" evidence="23">
    <location>
        <begin position="14"/>
        <end position="19"/>
    </location>
</feature>
<feature type="strand" evidence="23">
    <location>
        <begin position="22"/>
        <end position="29"/>
    </location>
</feature>
<feature type="turn" evidence="23">
    <location>
        <begin position="30"/>
        <end position="32"/>
    </location>
</feature>
<feature type="helix" evidence="23">
    <location>
        <begin position="34"/>
        <end position="45"/>
    </location>
</feature>
<feature type="turn" evidence="23">
    <location>
        <begin position="46"/>
        <end position="51"/>
    </location>
</feature>
<feature type="strand" evidence="23">
    <location>
        <begin position="56"/>
        <end position="58"/>
    </location>
</feature>
<feature type="turn" evidence="23">
    <location>
        <begin position="59"/>
        <end position="61"/>
    </location>
</feature>
<feature type="strand" evidence="23">
    <location>
        <begin position="62"/>
        <end position="65"/>
    </location>
</feature>
<feature type="strand" evidence="23">
    <location>
        <begin position="70"/>
        <end position="73"/>
    </location>
</feature>
<feature type="strand" evidence="23">
    <location>
        <begin position="95"/>
        <end position="101"/>
    </location>
</feature>
<feature type="strand" evidence="25">
    <location>
        <begin position="104"/>
        <end position="107"/>
    </location>
</feature>
<feature type="strand" evidence="23">
    <location>
        <begin position="113"/>
        <end position="118"/>
    </location>
</feature>
<feature type="helix" evidence="23">
    <location>
        <begin position="121"/>
        <end position="123"/>
    </location>
</feature>
<feature type="turn" evidence="23">
    <location>
        <begin position="124"/>
        <end position="126"/>
    </location>
</feature>
<feature type="strand" evidence="23">
    <location>
        <begin position="129"/>
        <end position="133"/>
    </location>
</feature>
<feature type="helix" evidence="23">
    <location>
        <begin position="135"/>
        <end position="137"/>
    </location>
</feature>
<feature type="helix" evidence="23">
    <location>
        <begin position="138"/>
        <end position="143"/>
    </location>
</feature>
<feature type="helix" evidence="24">
    <location>
        <begin position="151"/>
        <end position="153"/>
    </location>
</feature>
<feature type="strand" evidence="23">
    <location>
        <begin position="155"/>
        <end position="157"/>
    </location>
</feature>
<feature type="strand" evidence="23">
    <location>
        <begin position="160"/>
        <end position="168"/>
    </location>
</feature>
<feature type="helix" evidence="26">
    <location>
        <begin position="379"/>
        <end position="402"/>
    </location>
</feature>
<feature type="turn" evidence="26">
    <location>
        <begin position="419"/>
        <end position="421"/>
    </location>
</feature>
<protein>
    <recommendedName>
        <fullName evidence="14">Spliceosome-associated protein CWC27 homolog</fullName>
    </recommendedName>
    <alternativeName>
        <fullName evidence="13">Antigen NY-CO-10</fullName>
    </alternativeName>
    <alternativeName>
        <fullName evidence="15">Probable inactive peptidyl-prolyl cis-trans isomerase CWC27 homolog</fullName>
        <shortName evidence="15">PPIase CWC27</shortName>
    </alternativeName>
    <alternativeName>
        <fullName>Serologically defined colon cancer antigen 10</fullName>
    </alternativeName>
</protein>
<keyword id="KW-0002">3D-structure</keyword>
<keyword id="KW-0007">Acetylation</keyword>
<keyword id="KW-0025">Alternative splicing</keyword>
<keyword id="KW-0175">Coiled coil</keyword>
<keyword id="KW-0225">Disease variant</keyword>
<keyword id="KW-0242">Dwarfism</keyword>
<keyword id="KW-0325">Glycoprotein</keyword>
<keyword id="KW-0991">Intellectual disability</keyword>
<keyword id="KW-0539">Nucleus</keyword>
<keyword id="KW-0597">Phosphoprotein</keyword>
<keyword id="KW-1267">Proteomics identification</keyword>
<keyword id="KW-1185">Reference proteome</keyword>
<keyword id="KW-0682">Retinitis pigmentosa</keyword>
<sequence>MSNIYIQEPPTNGKVLLKTTAGDIDIELWSKEAPKACRNFIQLCLEAYYDNTIFHRVVPGFIVQGGDPTGTGSGGESIYGAPFKDEFHSRLRFNRRGLVAMANAGSHDNGSQFFFTLGRADELNNKHTIFGKVTGDTVYNMLRLSEVDIDDDERPHNPHKIKSCEVLFNPFDDIIPREIKRLKKEKPEEEVKKLKPKGTKNFSLLSFGEEAEEEEEEVNRVSQSMKGKSKSSHDLLKDDPHLSSVPVVESEKGDAPDLVDDGEDESAEHDEYIDGDEKNLMRERIAKKLKKDTSANVKSAGEGEVEKKSVSRSEELRKEARQLKRELLAAKQKKVENAAKQAEKRSEEEEAPPDGAVAEYRREKQKYEALRKQQSKKGTSREDQTLALLNQFKSKLTQAIAETPENDIPETEVEDDEGWMSHVLQFEDKSRKVKDASMQDSDTFEIYDPRNPVNKRRREESKKLMREKKERR</sequence>
<reference key="1">
    <citation type="journal article" date="1998" name="Int. J. Cancer">
        <title>Characterization of human colon cancer antigens recognized by autologous antibodies.</title>
        <authorList>
            <person name="Scanlan M.J."/>
            <person name="Chen Y.-T."/>
            <person name="Williamson B."/>
            <person name="Gure A.O."/>
            <person name="Stockert E."/>
            <person name="Gordan J.D."/>
            <person name="Tuereci O."/>
            <person name="Sahin U."/>
            <person name="Pfreundschuh M."/>
            <person name="Old L.J."/>
        </authorList>
    </citation>
    <scope>NUCLEOTIDE SEQUENCE [MRNA] (ISOFORM 1)</scope>
    <scope>VARIANT ALA-256</scope>
    <source>
        <tissue>Colon carcinoma</tissue>
    </source>
</reference>
<reference key="2">
    <citation type="journal article" date="2003" name="Genome Res.">
        <title>The secreted protein discovery initiative (SPDI), a large-scale effort to identify novel human secreted and transmembrane proteins: a bioinformatics assessment.</title>
        <authorList>
            <person name="Clark H.F."/>
            <person name="Gurney A.L."/>
            <person name="Abaya E."/>
            <person name="Baker K."/>
            <person name="Baldwin D.T."/>
            <person name="Brush J."/>
            <person name="Chen J."/>
            <person name="Chow B."/>
            <person name="Chui C."/>
            <person name="Crowley C."/>
            <person name="Currell B."/>
            <person name="Deuel B."/>
            <person name="Dowd P."/>
            <person name="Eaton D."/>
            <person name="Foster J.S."/>
            <person name="Grimaldi C."/>
            <person name="Gu Q."/>
            <person name="Hass P.E."/>
            <person name="Heldens S."/>
            <person name="Huang A."/>
            <person name="Kim H.S."/>
            <person name="Klimowski L."/>
            <person name="Jin Y."/>
            <person name="Johnson S."/>
            <person name="Lee J."/>
            <person name="Lewis L."/>
            <person name="Liao D."/>
            <person name="Mark M.R."/>
            <person name="Robbie E."/>
            <person name="Sanchez C."/>
            <person name="Schoenfeld J."/>
            <person name="Seshagiri S."/>
            <person name="Simmons L."/>
            <person name="Singh J."/>
            <person name="Smith V."/>
            <person name="Stinson J."/>
            <person name="Vagts A."/>
            <person name="Vandlen R.L."/>
            <person name="Watanabe C."/>
            <person name="Wieand D."/>
            <person name="Woods K."/>
            <person name="Xie M.-H."/>
            <person name="Yansura D.G."/>
            <person name="Yi S."/>
            <person name="Yu G."/>
            <person name="Yuan J."/>
            <person name="Zhang M."/>
            <person name="Zhang Z."/>
            <person name="Goddard A.D."/>
            <person name="Wood W.I."/>
            <person name="Godowski P.J."/>
            <person name="Gray A.M."/>
        </authorList>
    </citation>
    <scope>NUCLEOTIDE SEQUENCE [LARGE SCALE MRNA] (ISOFORM 1)</scope>
</reference>
<reference key="3">
    <citation type="submission" date="2005-09" db="EMBL/GenBank/DDBJ databases">
        <authorList>
            <person name="Mural R.J."/>
            <person name="Istrail S."/>
            <person name="Sutton G.G."/>
            <person name="Florea L."/>
            <person name="Halpern A.L."/>
            <person name="Mobarry C.M."/>
            <person name="Lippert R."/>
            <person name="Walenz B."/>
            <person name="Shatkay H."/>
            <person name="Dew I."/>
            <person name="Miller J.R."/>
            <person name="Flanigan M.J."/>
            <person name="Edwards N.J."/>
            <person name="Bolanos R."/>
            <person name="Fasulo D."/>
            <person name="Halldorsson B.V."/>
            <person name="Hannenhalli S."/>
            <person name="Turner R."/>
            <person name="Yooseph S."/>
            <person name="Lu F."/>
            <person name="Nusskern D.R."/>
            <person name="Shue B.C."/>
            <person name="Zheng X.H."/>
            <person name="Zhong F."/>
            <person name="Delcher A.L."/>
            <person name="Huson D.H."/>
            <person name="Kravitz S.A."/>
            <person name="Mouchard L."/>
            <person name="Reinert K."/>
            <person name="Remington K.A."/>
            <person name="Clark A.G."/>
            <person name="Waterman M.S."/>
            <person name="Eichler E.E."/>
            <person name="Adams M.D."/>
            <person name="Hunkapiller M.W."/>
            <person name="Myers E.W."/>
            <person name="Venter J.C."/>
        </authorList>
    </citation>
    <scope>NUCLEOTIDE SEQUENCE [LARGE SCALE GENOMIC DNA]</scope>
</reference>
<reference key="4">
    <citation type="journal article" date="2004" name="Genome Res.">
        <title>The status, quality, and expansion of the NIH full-length cDNA project: the Mammalian Gene Collection (MGC).</title>
        <authorList>
            <consortium name="The MGC Project Team"/>
        </authorList>
    </citation>
    <scope>NUCLEOTIDE SEQUENCE [LARGE SCALE MRNA] (ISOFORM 2)</scope>
    <source>
        <tissue>Uterus</tissue>
    </source>
</reference>
<reference key="5">
    <citation type="journal article" date="2005" name="J. Proteome Res.">
        <title>Human plasma N-glycoproteome analysis by immunoaffinity subtraction, hydrazide chemistry, and mass spectrometry.</title>
        <authorList>
            <person name="Liu T."/>
            <person name="Qian W.-J."/>
            <person name="Gritsenko M.A."/>
            <person name="Camp D.G. II"/>
            <person name="Monroe M.E."/>
            <person name="Moore R.J."/>
            <person name="Smith R.D."/>
        </authorList>
    </citation>
    <scope>GLYCOSYLATION [LARGE SCALE ANALYSIS] AT ASN-201</scope>
    <source>
        <tissue>Plasma</tissue>
    </source>
</reference>
<reference key="6">
    <citation type="journal article" date="2009" name="Anal. Chem.">
        <title>Lys-N and trypsin cover complementary parts of the phosphoproteome in a refined SCX-based approach.</title>
        <authorList>
            <person name="Gauci S."/>
            <person name="Helbig A.O."/>
            <person name="Slijper M."/>
            <person name="Krijgsveld J."/>
            <person name="Heck A.J."/>
            <person name="Mohammed S."/>
        </authorList>
    </citation>
    <scope>ACETYLATION [LARGE SCALE ANALYSIS] AT SER-2</scope>
    <scope>CLEAVAGE OF INITIATOR METHIONINE [LARGE SCALE ANALYSIS]</scope>
    <scope>IDENTIFICATION BY MASS SPECTROMETRY [LARGE SCALE ANALYSIS]</scope>
</reference>
<reference key="7">
    <citation type="journal article" date="2011" name="BMC Syst. Biol.">
        <title>Initial characterization of the human central proteome.</title>
        <authorList>
            <person name="Burkard T.R."/>
            <person name="Planyavsky M."/>
            <person name="Kaupe I."/>
            <person name="Breitwieser F.P."/>
            <person name="Buerckstuemmer T."/>
            <person name="Bennett K.L."/>
            <person name="Superti-Furga G."/>
            <person name="Colinge J."/>
        </authorList>
    </citation>
    <scope>IDENTIFICATION BY MASS SPECTROMETRY [LARGE SCALE ANALYSIS]</scope>
</reference>
<reference key="8">
    <citation type="journal article" date="2013" name="J. Proteome Res.">
        <title>Toward a comprehensive characterization of a human cancer cell phosphoproteome.</title>
        <authorList>
            <person name="Zhou H."/>
            <person name="Di Palma S."/>
            <person name="Preisinger C."/>
            <person name="Peng M."/>
            <person name="Polat A.N."/>
            <person name="Heck A.J."/>
            <person name="Mohammed S."/>
        </authorList>
    </citation>
    <scope>IDENTIFICATION BY MASS SPECTROMETRY [LARGE SCALE ANALYSIS]</scope>
    <source>
        <tissue>Erythroleukemia</tissue>
    </source>
</reference>
<reference evidence="19" key="9">
    <citation type="journal article" date="2010" name="PLoS Biol.">
        <title>Structural and biochemical characterization of the human cyclophilin family of peptidyl-prolyl isomerases.</title>
        <authorList>
            <person name="Davis T.L."/>
            <person name="Walker J.R."/>
            <person name="Campagna-Slater V."/>
            <person name="Finerty P.J."/>
            <person name="Paramanathan R."/>
            <person name="Bernstein G."/>
            <person name="MacKenzie F."/>
            <person name="Tempel W."/>
            <person name="Ouyang H."/>
            <person name="Lee W.H."/>
            <person name="Eisenmesser E.Z."/>
            <person name="Dhe-Paganon S."/>
        </authorList>
    </citation>
    <scope>X-RAY CRYSTALLOGRAPHY (1.75 ANGSTROMS) OF 8-173</scope>
    <scope>FUNCTION</scope>
    <scope>CAUTION</scope>
</reference>
<reference evidence="20" key="10">
    <citation type="journal article" date="2014" name="Acta Crystallogr. D">
        <title>Structure and evolution of the spliceosomal peptidyl-prolyl cis-trans isomerase Cwc27.</title>
        <authorList>
            <person name="Ulrich A."/>
            <person name="Wahl M.C."/>
        </authorList>
    </citation>
    <scope>X-RAY CRYSTALLOGRAPHY (2.00 ANGSTROMS) OF 1-178</scope>
</reference>
<reference key="11">
    <citation type="journal article" date="2018" name="Cell Res.">
        <title>Structure of the human activated spliceosome in three conformational states.</title>
        <authorList>
            <person name="Zhang X."/>
            <person name="Yan C."/>
            <person name="Zhan X."/>
            <person name="Li L."/>
            <person name="Lei J."/>
            <person name="Shi Y."/>
        </authorList>
    </citation>
    <scope>STRUCTURE BY ELECTRON MICROSCOPY (4.90 ANGSTROMS)</scope>
    <scope>FUNCTION</scope>
    <scope>SUBUNIT</scope>
    <scope>SUBCELLULAR LOCATION</scope>
</reference>
<reference key="12">
    <citation type="journal article" date="2017" name="Am. J. Hum. Genet.">
        <title>Mutations in the spliceosome component CWC27 cause retinal degeneration with or without additional developmental anomalies.</title>
        <authorList>
            <consortium name="UK Inherited Retinal Dystrophy Consortium"/>
            <person name="Xu M."/>
            <person name="Xie Y.A."/>
            <person name="Abouzeid H."/>
            <person name="Gordon C.T."/>
            <person name="Fiorentino A."/>
            <person name="Sun Z."/>
            <person name="Lehman A."/>
            <person name="Osman I.S."/>
            <person name="Dharmat R."/>
            <person name="Riveiro-Alvarez R."/>
            <person name="Bapst-Wicht L."/>
            <person name="Babino D."/>
            <person name="Arno G."/>
            <person name="Busetto V."/>
            <person name="Zhao L."/>
            <person name="Li H."/>
            <person name="Lopez-Martinez M.A."/>
            <person name="Azevedo L.F."/>
            <person name="Hubert L."/>
            <person name="Pontikos N."/>
            <person name="Eblimit A."/>
            <person name="Lorda-Sanchez I."/>
            <person name="Kheir V."/>
            <person name="Plagnol V."/>
            <person name="Oufadem M."/>
            <person name="Soens Z.T."/>
            <person name="Yang L."/>
            <person name="Bole-Feysot C."/>
            <person name="Pfundt R."/>
            <person name="Allaman-Pillet N."/>
            <person name="Nitschke P."/>
            <person name="Cheetham M.E."/>
            <person name="Lyonnet S."/>
            <person name="Agrawal S.A."/>
            <person name="Li H."/>
            <person name="Pinton G."/>
            <person name="Michaelides M."/>
            <person name="Besmond C."/>
            <person name="Li Y."/>
            <person name="Yuan Z."/>
            <person name="von Lintig J."/>
            <person name="Webster A.R."/>
            <person name="Le Hir H."/>
            <person name="Stoilov P."/>
            <person name="Amiel J."/>
            <person name="Hardcastle A.J."/>
            <person name="Ayuso C."/>
            <person name="Sui R."/>
            <person name="Chen R."/>
            <person name="Allikmets R."/>
            <person name="Schorderet D.F."/>
        </authorList>
    </citation>
    <scope>INVOLVEMENT IN RPSKA</scope>
    <scope>VARIANTS RPSKA 7-GLN--ARG-472 DEL; 143-ARG--ARG-472 DEL; 206-SER--ARG-472 DEL AND 315-GLU--ARG-472 DEL</scope>
</reference>
<reference evidence="21" key="13">
    <citation type="journal article" date="2021" name="Science">
        <title>Structure of the activated human minor spliceosome.</title>
        <authorList>
            <person name="Bai R."/>
            <person name="Wan R."/>
            <person name="Wang L."/>
            <person name="Xu K."/>
            <person name="Zhang Q."/>
            <person name="Lei J."/>
            <person name="Shi Y."/>
        </authorList>
    </citation>
    <scope>STRUCTURE BY ELECTRON MICROSCOPY (2.89 ANGSTROMS)</scope>
    <scope>SUBUNIT</scope>
</reference>
<evidence type="ECO:0000250" key="1">
    <source>
        <dbReference type="UniProtKB" id="Q5XIB2"/>
    </source>
</evidence>
<evidence type="ECO:0000255" key="2"/>
<evidence type="ECO:0000255" key="3">
    <source>
        <dbReference type="PROSITE-ProRule" id="PRU00156"/>
    </source>
</evidence>
<evidence type="ECO:0000256" key="4">
    <source>
        <dbReference type="SAM" id="MobiDB-lite"/>
    </source>
</evidence>
<evidence type="ECO:0000269" key="5">
    <source>
    </source>
</evidence>
<evidence type="ECO:0000269" key="6">
    <source>
    </source>
</evidence>
<evidence type="ECO:0000269" key="7">
    <source>
    </source>
</evidence>
<evidence type="ECO:0000269" key="8">
    <source>
    </source>
</evidence>
<evidence type="ECO:0000269" key="9">
    <source>
    </source>
</evidence>
<evidence type="ECO:0000269" key="10">
    <source>
    </source>
</evidence>
<evidence type="ECO:0000303" key="11">
    <source>
    </source>
</evidence>
<evidence type="ECO:0000303" key="12">
    <source>
    </source>
</evidence>
<evidence type="ECO:0000303" key="13">
    <source>
    </source>
</evidence>
<evidence type="ECO:0000305" key="14"/>
<evidence type="ECO:0000305" key="15">
    <source>
    </source>
</evidence>
<evidence type="ECO:0000305" key="16">
    <source>
    </source>
</evidence>
<evidence type="ECO:0000305" key="17">
    <source>
    </source>
</evidence>
<evidence type="ECO:0000312" key="18">
    <source>
        <dbReference type="HGNC" id="HGNC:10664"/>
    </source>
</evidence>
<evidence type="ECO:0007744" key="19">
    <source>
        <dbReference type="PDB" id="2HQ6"/>
    </source>
</evidence>
<evidence type="ECO:0007744" key="20">
    <source>
        <dbReference type="PDB" id="4R3E"/>
    </source>
</evidence>
<evidence type="ECO:0007744" key="21">
    <source>
        <dbReference type="PDB" id="7DVQ"/>
    </source>
</evidence>
<evidence type="ECO:0007744" key="22">
    <source>
    </source>
</evidence>
<evidence type="ECO:0007829" key="23">
    <source>
        <dbReference type="PDB" id="2HQ6"/>
    </source>
</evidence>
<evidence type="ECO:0007829" key="24">
    <source>
        <dbReference type="PDB" id="4R3E"/>
    </source>
</evidence>
<evidence type="ECO:0007829" key="25">
    <source>
        <dbReference type="PDB" id="6FF4"/>
    </source>
</evidence>
<evidence type="ECO:0007829" key="26">
    <source>
        <dbReference type="PDB" id="6YVH"/>
    </source>
</evidence>